<proteinExistence type="inferred from homology"/>
<gene>
    <name evidence="1" type="primary">thrB</name>
    <name type="ordered locus">Bcenmc03_3660</name>
</gene>
<reference key="1">
    <citation type="submission" date="2008-02" db="EMBL/GenBank/DDBJ databases">
        <title>Complete sequence of chromosome 2 of Burkholderia cenocepacia MC0-3.</title>
        <authorList>
            <person name="Copeland A."/>
            <person name="Lucas S."/>
            <person name="Lapidus A."/>
            <person name="Barry K."/>
            <person name="Bruce D."/>
            <person name="Goodwin L."/>
            <person name="Glavina del Rio T."/>
            <person name="Dalin E."/>
            <person name="Tice H."/>
            <person name="Pitluck S."/>
            <person name="Chain P."/>
            <person name="Malfatti S."/>
            <person name="Shin M."/>
            <person name="Vergez L."/>
            <person name="Schmutz J."/>
            <person name="Larimer F."/>
            <person name="Land M."/>
            <person name="Hauser L."/>
            <person name="Kyrpides N."/>
            <person name="Mikhailova N."/>
            <person name="Tiedje J."/>
            <person name="Richardson P."/>
        </authorList>
    </citation>
    <scope>NUCLEOTIDE SEQUENCE [LARGE SCALE GENOMIC DNA]</scope>
    <source>
        <strain>MC0-3</strain>
    </source>
</reference>
<feature type="chain" id="PRO_1000115426" description="Homoserine kinase">
    <location>
        <begin position="1"/>
        <end position="332"/>
    </location>
</feature>
<evidence type="ECO:0000255" key="1">
    <source>
        <dbReference type="HAMAP-Rule" id="MF_00301"/>
    </source>
</evidence>
<comment type="catalytic activity">
    <reaction evidence="1">
        <text>L-homoserine + ATP = O-phospho-L-homoserine + ADP + H(+)</text>
        <dbReference type="Rhea" id="RHEA:13985"/>
        <dbReference type="ChEBI" id="CHEBI:15378"/>
        <dbReference type="ChEBI" id="CHEBI:30616"/>
        <dbReference type="ChEBI" id="CHEBI:57476"/>
        <dbReference type="ChEBI" id="CHEBI:57590"/>
        <dbReference type="ChEBI" id="CHEBI:456216"/>
        <dbReference type="EC" id="2.7.1.39"/>
    </reaction>
</comment>
<comment type="pathway">
    <text evidence="1">Amino-acid biosynthesis; L-threonine biosynthesis; L-threonine from L-aspartate: step 4/5.</text>
</comment>
<comment type="similarity">
    <text evidence="1">Belongs to the pseudomonas-type ThrB family.</text>
</comment>
<protein>
    <recommendedName>
        <fullName evidence="1">Homoserine kinase</fullName>
        <shortName evidence="1">HK</shortName>
        <shortName evidence="1">HSK</shortName>
        <ecNumber evidence="1">2.7.1.39</ecNumber>
    </recommendedName>
</protein>
<dbReference type="EC" id="2.7.1.39" evidence="1"/>
<dbReference type="EMBL" id="CP000959">
    <property type="protein sequence ID" value="ACA92812.1"/>
    <property type="molecule type" value="Genomic_DNA"/>
</dbReference>
<dbReference type="RefSeq" id="WP_011548158.1">
    <property type="nucleotide sequence ID" value="NC_010515.1"/>
</dbReference>
<dbReference type="SMR" id="B1K3U1"/>
<dbReference type="GeneID" id="83050437"/>
<dbReference type="KEGG" id="bcm:Bcenmc03_3660"/>
<dbReference type="HOGENOM" id="CLU_053300_0_0_4"/>
<dbReference type="UniPathway" id="UPA00050">
    <property type="reaction ID" value="UER00064"/>
</dbReference>
<dbReference type="Proteomes" id="UP000002169">
    <property type="component" value="Chromosome 2"/>
</dbReference>
<dbReference type="GO" id="GO:0005524">
    <property type="term" value="F:ATP binding"/>
    <property type="evidence" value="ECO:0007669"/>
    <property type="project" value="UniProtKB-KW"/>
</dbReference>
<dbReference type="GO" id="GO:0004413">
    <property type="term" value="F:homoserine kinase activity"/>
    <property type="evidence" value="ECO:0007669"/>
    <property type="project" value="UniProtKB-UniRule"/>
</dbReference>
<dbReference type="GO" id="GO:0009088">
    <property type="term" value="P:threonine biosynthetic process"/>
    <property type="evidence" value="ECO:0007669"/>
    <property type="project" value="UniProtKB-UniRule"/>
</dbReference>
<dbReference type="CDD" id="cd05153">
    <property type="entry name" value="HomoserineK_II"/>
    <property type="match status" value="1"/>
</dbReference>
<dbReference type="Gene3D" id="3.90.1200.10">
    <property type="match status" value="1"/>
</dbReference>
<dbReference type="Gene3D" id="3.30.200.20">
    <property type="entry name" value="Phosphorylase Kinase, domain 1"/>
    <property type="match status" value="1"/>
</dbReference>
<dbReference type="HAMAP" id="MF_00301">
    <property type="entry name" value="Homoser_kinase_2"/>
    <property type="match status" value="1"/>
</dbReference>
<dbReference type="InterPro" id="IPR002575">
    <property type="entry name" value="Aminoglycoside_PTrfase"/>
</dbReference>
<dbReference type="InterPro" id="IPR005280">
    <property type="entry name" value="Homoserine_kinase_II"/>
</dbReference>
<dbReference type="InterPro" id="IPR011009">
    <property type="entry name" value="Kinase-like_dom_sf"/>
</dbReference>
<dbReference type="InterPro" id="IPR050249">
    <property type="entry name" value="Pseudomonas-type_ThrB"/>
</dbReference>
<dbReference type="NCBIfam" id="NF003558">
    <property type="entry name" value="PRK05231.1"/>
    <property type="match status" value="1"/>
</dbReference>
<dbReference type="NCBIfam" id="TIGR00938">
    <property type="entry name" value="thrB_alt"/>
    <property type="match status" value="1"/>
</dbReference>
<dbReference type="PANTHER" id="PTHR21064:SF6">
    <property type="entry name" value="AMINOGLYCOSIDE PHOSPHOTRANSFERASE DOMAIN-CONTAINING PROTEIN"/>
    <property type="match status" value="1"/>
</dbReference>
<dbReference type="PANTHER" id="PTHR21064">
    <property type="entry name" value="AMINOGLYCOSIDE PHOSPHOTRANSFERASE DOMAIN-CONTAINING PROTEIN-RELATED"/>
    <property type="match status" value="1"/>
</dbReference>
<dbReference type="Pfam" id="PF01636">
    <property type="entry name" value="APH"/>
    <property type="match status" value="1"/>
</dbReference>
<dbReference type="SUPFAM" id="SSF56112">
    <property type="entry name" value="Protein kinase-like (PK-like)"/>
    <property type="match status" value="1"/>
</dbReference>
<organism>
    <name type="scientific">Burkholderia orbicola (strain MC0-3)</name>
    <dbReference type="NCBI Taxonomy" id="406425"/>
    <lineage>
        <taxon>Bacteria</taxon>
        <taxon>Pseudomonadati</taxon>
        <taxon>Pseudomonadota</taxon>
        <taxon>Betaproteobacteria</taxon>
        <taxon>Burkholderiales</taxon>
        <taxon>Burkholderiaceae</taxon>
        <taxon>Burkholderia</taxon>
        <taxon>Burkholderia cepacia complex</taxon>
        <taxon>Burkholderia orbicola</taxon>
    </lineage>
</organism>
<sequence length="332" mass="37186">MAVFTAVSDSDLAQWMRHYELGDVLAFRGIPSGIENSNFFLTTTRGEYVLTIFEKLTAQQLPFYLDLMRHLAAHGVPVPDPIPRDDGALFGELHGKPAAIVTKLDGAAELAPGVEHCIEVGQMLARLHLAGRDYPRNQPNLRSLPWWQENVPAIVPFITDAQRALLEGELAHQAGFFASDDYAALPAGPCHCDLFRDNVLFAHAAPGTGHDVRLGGFFDFYFAGCDKWLFDVAVTVNDWCVDLATGVLDVARADALLRAYQTVRPFTAEERRHWSDMLRAGAYRFWVSRLYDFYLPRAAEMLKPHDPGHFERILRERIAHTPALPEIQTACN</sequence>
<keyword id="KW-0028">Amino-acid biosynthesis</keyword>
<keyword id="KW-0067">ATP-binding</keyword>
<keyword id="KW-0418">Kinase</keyword>
<keyword id="KW-0547">Nucleotide-binding</keyword>
<keyword id="KW-0791">Threonine biosynthesis</keyword>
<keyword id="KW-0808">Transferase</keyword>
<name>KHSE_BURO0</name>
<accession>B1K3U1</accession>